<gene>
    <name evidence="1" type="primary">mraY</name>
    <name type="ordered locus">VV1_0581</name>
</gene>
<accession>Q8DEK7</accession>
<reference key="1">
    <citation type="submission" date="2002-12" db="EMBL/GenBank/DDBJ databases">
        <title>Complete genome sequence of Vibrio vulnificus CMCP6.</title>
        <authorList>
            <person name="Rhee J.H."/>
            <person name="Kim S.Y."/>
            <person name="Chung S.S."/>
            <person name="Kim J.J."/>
            <person name="Moon Y.H."/>
            <person name="Jeong H."/>
            <person name="Choy H.E."/>
        </authorList>
    </citation>
    <scope>NUCLEOTIDE SEQUENCE [LARGE SCALE GENOMIC DNA]</scope>
    <source>
        <strain>CMCP6</strain>
    </source>
</reference>
<keyword id="KW-0131">Cell cycle</keyword>
<keyword id="KW-0132">Cell division</keyword>
<keyword id="KW-0997">Cell inner membrane</keyword>
<keyword id="KW-1003">Cell membrane</keyword>
<keyword id="KW-0133">Cell shape</keyword>
<keyword id="KW-0961">Cell wall biogenesis/degradation</keyword>
<keyword id="KW-0460">Magnesium</keyword>
<keyword id="KW-0472">Membrane</keyword>
<keyword id="KW-0479">Metal-binding</keyword>
<keyword id="KW-0573">Peptidoglycan synthesis</keyword>
<keyword id="KW-0808">Transferase</keyword>
<keyword id="KW-0812">Transmembrane</keyword>
<keyword id="KW-1133">Transmembrane helix</keyword>
<name>MRAY_VIBVU</name>
<dbReference type="EC" id="2.7.8.13" evidence="1"/>
<dbReference type="EMBL" id="AE016795">
    <property type="protein sequence ID" value="AAO09097.1"/>
    <property type="molecule type" value="Genomic_DNA"/>
</dbReference>
<dbReference type="RefSeq" id="WP_011078666.1">
    <property type="nucleotide sequence ID" value="NC_004459.3"/>
</dbReference>
<dbReference type="SMR" id="Q8DEK7"/>
<dbReference type="KEGG" id="vvu:VV1_0581"/>
<dbReference type="HOGENOM" id="CLU_023982_0_0_6"/>
<dbReference type="UniPathway" id="UPA00219"/>
<dbReference type="Proteomes" id="UP000002275">
    <property type="component" value="Chromosome 1"/>
</dbReference>
<dbReference type="GO" id="GO:0005886">
    <property type="term" value="C:plasma membrane"/>
    <property type="evidence" value="ECO:0007669"/>
    <property type="project" value="UniProtKB-SubCell"/>
</dbReference>
<dbReference type="GO" id="GO:0046872">
    <property type="term" value="F:metal ion binding"/>
    <property type="evidence" value="ECO:0007669"/>
    <property type="project" value="UniProtKB-KW"/>
</dbReference>
<dbReference type="GO" id="GO:0008963">
    <property type="term" value="F:phospho-N-acetylmuramoyl-pentapeptide-transferase activity"/>
    <property type="evidence" value="ECO:0007669"/>
    <property type="project" value="UniProtKB-UniRule"/>
</dbReference>
<dbReference type="GO" id="GO:0051992">
    <property type="term" value="F:UDP-N-acetylmuramoyl-L-alanyl-D-glutamyl-meso-2,6-diaminopimelyl-D-alanyl-D-alanine:undecaprenyl-phosphate transferase activity"/>
    <property type="evidence" value="ECO:0007669"/>
    <property type="project" value="RHEA"/>
</dbReference>
<dbReference type="GO" id="GO:0051301">
    <property type="term" value="P:cell division"/>
    <property type="evidence" value="ECO:0007669"/>
    <property type="project" value="UniProtKB-KW"/>
</dbReference>
<dbReference type="GO" id="GO:0071555">
    <property type="term" value="P:cell wall organization"/>
    <property type="evidence" value="ECO:0007669"/>
    <property type="project" value="UniProtKB-KW"/>
</dbReference>
<dbReference type="GO" id="GO:0009252">
    <property type="term" value="P:peptidoglycan biosynthetic process"/>
    <property type="evidence" value="ECO:0007669"/>
    <property type="project" value="UniProtKB-UniRule"/>
</dbReference>
<dbReference type="GO" id="GO:0008360">
    <property type="term" value="P:regulation of cell shape"/>
    <property type="evidence" value="ECO:0007669"/>
    <property type="project" value="UniProtKB-KW"/>
</dbReference>
<dbReference type="CDD" id="cd06852">
    <property type="entry name" value="GT_MraY"/>
    <property type="match status" value="1"/>
</dbReference>
<dbReference type="HAMAP" id="MF_00038">
    <property type="entry name" value="MraY"/>
    <property type="match status" value="1"/>
</dbReference>
<dbReference type="InterPro" id="IPR000715">
    <property type="entry name" value="Glycosyl_transferase_4"/>
</dbReference>
<dbReference type="InterPro" id="IPR003524">
    <property type="entry name" value="PNAcMuramoyl-5peptid_Trfase"/>
</dbReference>
<dbReference type="InterPro" id="IPR018480">
    <property type="entry name" value="PNAcMuramoyl-5peptid_Trfase_CS"/>
</dbReference>
<dbReference type="NCBIfam" id="TIGR00445">
    <property type="entry name" value="mraY"/>
    <property type="match status" value="1"/>
</dbReference>
<dbReference type="PANTHER" id="PTHR22926">
    <property type="entry name" value="PHOSPHO-N-ACETYLMURAMOYL-PENTAPEPTIDE-TRANSFERASE"/>
    <property type="match status" value="1"/>
</dbReference>
<dbReference type="PANTHER" id="PTHR22926:SF5">
    <property type="entry name" value="PHOSPHO-N-ACETYLMURAMOYL-PENTAPEPTIDE-TRANSFERASE HOMOLOG"/>
    <property type="match status" value="1"/>
</dbReference>
<dbReference type="Pfam" id="PF00953">
    <property type="entry name" value="Glycos_transf_4"/>
    <property type="match status" value="1"/>
</dbReference>
<dbReference type="Pfam" id="PF10555">
    <property type="entry name" value="MraY_sig1"/>
    <property type="match status" value="1"/>
</dbReference>
<dbReference type="PROSITE" id="PS01347">
    <property type="entry name" value="MRAY_1"/>
    <property type="match status" value="1"/>
</dbReference>
<dbReference type="PROSITE" id="PS01348">
    <property type="entry name" value="MRAY_2"/>
    <property type="match status" value="1"/>
</dbReference>
<proteinExistence type="inferred from homology"/>
<protein>
    <recommendedName>
        <fullName evidence="1">Phospho-N-acetylmuramoyl-pentapeptide-transferase</fullName>
        <ecNumber evidence="1">2.7.8.13</ecNumber>
    </recommendedName>
    <alternativeName>
        <fullName evidence="1">UDP-MurNAc-pentapeptide phosphotransferase</fullName>
    </alternativeName>
</protein>
<sequence>MIIWLAELLQPYFSFFRLFEYLSFRAILSVLTALGLSLWMGPRLIKRLQLLQIGQVVRNEGPESHFSKRGTPTMGGVMILAAISITILLWANLSNPYVWAVLAVLMGYGAVGFVDDYRKVVRKNTDGLIARWKYFWQSAIALIVAFALYAYGKDTAATQLVVPFFKDVMPQLGLMYIVLTYFVIVGTSNAVNLTDGLDGLAIMPTVLVAAGFAVIAWATGNVNFSQYLHIPYLPHASELVVVCTAIVGAGLGFLWFNTYPAQVFMGDVGSLALGGALGTIAVLVRQELVLVIMGGVFVMETLSVILQVGSYKLRGQRIFRMAPIHHHYELKGWPEPRVIVRFWIISMVLVLIGLATLKVR</sequence>
<organism>
    <name type="scientific">Vibrio vulnificus (strain CMCP6)</name>
    <dbReference type="NCBI Taxonomy" id="216895"/>
    <lineage>
        <taxon>Bacteria</taxon>
        <taxon>Pseudomonadati</taxon>
        <taxon>Pseudomonadota</taxon>
        <taxon>Gammaproteobacteria</taxon>
        <taxon>Vibrionales</taxon>
        <taxon>Vibrionaceae</taxon>
        <taxon>Vibrio</taxon>
    </lineage>
</organism>
<evidence type="ECO:0000255" key="1">
    <source>
        <dbReference type="HAMAP-Rule" id="MF_00038"/>
    </source>
</evidence>
<feature type="chain" id="PRO_0000108925" description="Phospho-N-acetylmuramoyl-pentapeptide-transferase">
    <location>
        <begin position="1"/>
        <end position="360"/>
    </location>
</feature>
<feature type="transmembrane region" description="Helical" evidence="1">
    <location>
        <begin position="21"/>
        <end position="41"/>
    </location>
</feature>
<feature type="transmembrane region" description="Helical" evidence="1">
    <location>
        <begin position="73"/>
        <end position="93"/>
    </location>
</feature>
<feature type="transmembrane region" description="Helical" evidence="1">
    <location>
        <begin position="94"/>
        <end position="114"/>
    </location>
</feature>
<feature type="transmembrane region" description="Helical" evidence="1">
    <location>
        <begin position="132"/>
        <end position="152"/>
    </location>
</feature>
<feature type="transmembrane region" description="Helical" evidence="1">
    <location>
        <begin position="168"/>
        <end position="188"/>
    </location>
</feature>
<feature type="transmembrane region" description="Helical" evidence="1">
    <location>
        <begin position="199"/>
        <end position="219"/>
    </location>
</feature>
<feature type="transmembrane region" description="Helical" evidence="1">
    <location>
        <begin position="236"/>
        <end position="256"/>
    </location>
</feature>
<feature type="transmembrane region" description="Helical" evidence="1">
    <location>
        <begin position="263"/>
        <end position="283"/>
    </location>
</feature>
<feature type="transmembrane region" description="Helical" evidence="1">
    <location>
        <begin position="288"/>
        <end position="308"/>
    </location>
</feature>
<feature type="transmembrane region" description="Helical" evidence="1">
    <location>
        <begin position="338"/>
        <end position="358"/>
    </location>
</feature>
<comment type="function">
    <text evidence="1">Catalyzes the initial step of the lipid cycle reactions in the biosynthesis of the cell wall peptidoglycan: transfers peptidoglycan precursor phospho-MurNAc-pentapeptide from UDP-MurNAc-pentapeptide onto the lipid carrier undecaprenyl phosphate, yielding undecaprenyl-pyrophosphoryl-MurNAc-pentapeptide, known as lipid I.</text>
</comment>
<comment type="catalytic activity">
    <reaction evidence="1">
        <text>UDP-N-acetyl-alpha-D-muramoyl-L-alanyl-gamma-D-glutamyl-meso-2,6-diaminopimeloyl-D-alanyl-D-alanine + di-trans,octa-cis-undecaprenyl phosphate = di-trans,octa-cis-undecaprenyl diphospho-N-acetyl-alpha-D-muramoyl-L-alanyl-D-glutamyl-meso-2,6-diaminopimeloyl-D-alanyl-D-alanine + UMP</text>
        <dbReference type="Rhea" id="RHEA:28386"/>
        <dbReference type="ChEBI" id="CHEBI:57865"/>
        <dbReference type="ChEBI" id="CHEBI:60392"/>
        <dbReference type="ChEBI" id="CHEBI:61386"/>
        <dbReference type="ChEBI" id="CHEBI:61387"/>
        <dbReference type="EC" id="2.7.8.13"/>
    </reaction>
</comment>
<comment type="cofactor">
    <cofactor evidence="1">
        <name>Mg(2+)</name>
        <dbReference type="ChEBI" id="CHEBI:18420"/>
    </cofactor>
</comment>
<comment type="pathway">
    <text evidence="1">Cell wall biogenesis; peptidoglycan biosynthesis.</text>
</comment>
<comment type="subcellular location">
    <subcellularLocation>
        <location evidence="1">Cell inner membrane</location>
        <topology evidence="1">Multi-pass membrane protein</topology>
    </subcellularLocation>
</comment>
<comment type="similarity">
    <text evidence="1">Belongs to the glycosyltransferase 4 family. MraY subfamily.</text>
</comment>